<evidence type="ECO:0000255" key="1">
    <source>
        <dbReference type="HAMAP-Rule" id="MF_00014"/>
    </source>
</evidence>
<protein>
    <recommendedName>
        <fullName evidence="1">Ribosome maturation factor RimM</fullName>
    </recommendedName>
</protein>
<proteinExistence type="inferred from homology"/>
<dbReference type="EMBL" id="CP000155">
    <property type="protein sequence ID" value="ABC28617.1"/>
    <property type="molecule type" value="Genomic_DNA"/>
</dbReference>
<dbReference type="RefSeq" id="WP_011395689.1">
    <property type="nucleotide sequence ID" value="NC_007645.1"/>
</dbReference>
<dbReference type="SMR" id="Q2SL57"/>
<dbReference type="STRING" id="349521.HCH_01773"/>
<dbReference type="KEGG" id="hch:HCH_01773"/>
<dbReference type="eggNOG" id="COG0806">
    <property type="taxonomic scope" value="Bacteria"/>
</dbReference>
<dbReference type="HOGENOM" id="CLU_077636_1_0_6"/>
<dbReference type="OrthoDB" id="9783509at2"/>
<dbReference type="Proteomes" id="UP000000238">
    <property type="component" value="Chromosome"/>
</dbReference>
<dbReference type="GO" id="GO:0005737">
    <property type="term" value="C:cytoplasm"/>
    <property type="evidence" value="ECO:0007669"/>
    <property type="project" value="UniProtKB-SubCell"/>
</dbReference>
<dbReference type="GO" id="GO:0005840">
    <property type="term" value="C:ribosome"/>
    <property type="evidence" value="ECO:0007669"/>
    <property type="project" value="InterPro"/>
</dbReference>
<dbReference type="GO" id="GO:0043022">
    <property type="term" value="F:ribosome binding"/>
    <property type="evidence" value="ECO:0007669"/>
    <property type="project" value="InterPro"/>
</dbReference>
<dbReference type="GO" id="GO:0042274">
    <property type="term" value="P:ribosomal small subunit biogenesis"/>
    <property type="evidence" value="ECO:0007669"/>
    <property type="project" value="UniProtKB-UniRule"/>
</dbReference>
<dbReference type="GO" id="GO:0006364">
    <property type="term" value="P:rRNA processing"/>
    <property type="evidence" value="ECO:0007669"/>
    <property type="project" value="UniProtKB-UniRule"/>
</dbReference>
<dbReference type="Gene3D" id="2.30.30.240">
    <property type="entry name" value="PRC-barrel domain"/>
    <property type="match status" value="1"/>
</dbReference>
<dbReference type="Gene3D" id="2.40.30.60">
    <property type="entry name" value="RimM"/>
    <property type="match status" value="1"/>
</dbReference>
<dbReference type="HAMAP" id="MF_00014">
    <property type="entry name" value="Ribosome_mat_RimM"/>
    <property type="match status" value="1"/>
</dbReference>
<dbReference type="InterPro" id="IPR027275">
    <property type="entry name" value="PRC-brl_dom"/>
</dbReference>
<dbReference type="InterPro" id="IPR011033">
    <property type="entry name" value="PRC_barrel-like_sf"/>
</dbReference>
<dbReference type="InterPro" id="IPR011961">
    <property type="entry name" value="RimM"/>
</dbReference>
<dbReference type="InterPro" id="IPR002676">
    <property type="entry name" value="RimM_N"/>
</dbReference>
<dbReference type="InterPro" id="IPR036976">
    <property type="entry name" value="RimM_N_sf"/>
</dbReference>
<dbReference type="InterPro" id="IPR009000">
    <property type="entry name" value="Transl_B-barrel_sf"/>
</dbReference>
<dbReference type="NCBIfam" id="TIGR02273">
    <property type="entry name" value="16S_RimM"/>
    <property type="match status" value="1"/>
</dbReference>
<dbReference type="PANTHER" id="PTHR33692">
    <property type="entry name" value="RIBOSOME MATURATION FACTOR RIMM"/>
    <property type="match status" value="1"/>
</dbReference>
<dbReference type="PANTHER" id="PTHR33692:SF1">
    <property type="entry name" value="RIBOSOME MATURATION FACTOR RIMM"/>
    <property type="match status" value="1"/>
</dbReference>
<dbReference type="Pfam" id="PF05239">
    <property type="entry name" value="PRC"/>
    <property type="match status" value="1"/>
</dbReference>
<dbReference type="Pfam" id="PF01782">
    <property type="entry name" value="RimM"/>
    <property type="match status" value="1"/>
</dbReference>
<dbReference type="SUPFAM" id="SSF50346">
    <property type="entry name" value="PRC-barrel domain"/>
    <property type="match status" value="1"/>
</dbReference>
<dbReference type="SUPFAM" id="SSF50447">
    <property type="entry name" value="Translation proteins"/>
    <property type="match status" value="1"/>
</dbReference>
<sequence length="173" mass="19275">MSEKVCIGKIVGVYGVKGWLKVRSFTSPPENMLRYANWELVREDGNRSSAKLRSGKPQGKGIVIALAGVDDRNLAKSYVGCQIEIESSELPALEEGEYYWRQLEGLTVFTSEGVNIGRVSHLIETGANDVLVVIGSAESIDKRERLIPYLPGQFIENIDLDKNLMVVDWDPDF</sequence>
<feature type="chain" id="PRO_0000244134" description="Ribosome maturation factor RimM">
    <location>
        <begin position="1"/>
        <end position="173"/>
    </location>
</feature>
<feature type="domain" description="PRC barrel" evidence="1">
    <location>
        <begin position="95"/>
        <end position="173"/>
    </location>
</feature>
<organism>
    <name type="scientific">Hahella chejuensis (strain KCTC 2396)</name>
    <dbReference type="NCBI Taxonomy" id="349521"/>
    <lineage>
        <taxon>Bacteria</taxon>
        <taxon>Pseudomonadati</taxon>
        <taxon>Pseudomonadota</taxon>
        <taxon>Gammaproteobacteria</taxon>
        <taxon>Oceanospirillales</taxon>
        <taxon>Hahellaceae</taxon>
        <taxon>Hahella</taxon>
    </lineage>
</organism>
<keyword id="KW-0143">Chaperone</keyword>
<keyword id="KW-0963">Cytoplasm</keyword>
<keyword id="KW-1185">Reference proteome</keyword>
<keyword id="KW-0690">Ribosome biogenesis</keyword>
<keyword id="KW-0698">rRNA processing</keyword>
<reference key="1">
    <citation type="journal article" date="2005" name="Nucleic Acids Res.">
        <title>Genomic blueprint of Hahella chejuensis, a marine microbe producing an algicidal agent.</title>
        <authorList>
            <person name="Jeong H."/>
            <person name="Yim J.H."/>
            <person name="Lee C."/>
            <person name="Choi S.-H."/>
            <person name="Park Y.K."/>
            <person name="Yoon S.H."/>
            <person name="Hur C.-G."/>
            <person name="Kang H.-Y."/>
            <person name="Kim D."/>
            <person name="Lee H.H."/>
            <person name="Park K.H."/>
            <person name="Park S.-H."/>
            <person name="Park H.-S."/>
            <person name="Lee H.K."/>
            <person name="Oh T.K."/>
            <person name="Kim J.F."/>
        </authorList>
    </citation>
    <scope>NUCLEOTIDE SEQUENCE [LARGE SCALE GENOMIC DNA]</scope>
    <source>
        <strain>KCTC 2396</strain>
    </source>
</reference>
<accession>Q2SL57</accession>
<name>RIMM_HAHCH</name>
<gene>
    <name evidence="1" type="primary">rimM</name>
    <name type="ordered locus">HCH_01773</name>
</gene>
<comment type="function">
    <text evidence="1">An accessory protein needed during the final step in the assembly of 30S ribosomal subunit, possibly for assembly of the head region. Essential for efficient processing of 16S rRNA. May be needed both before and after RbfA during the maturation of 16S rRNA. It has affinity for free ribosomal 30S subunits but not for 70S ribosomes.</text>
</comment>
<comment type="subunit">
    <text evidence="1">Binds ribosomal protein uS19.</text>
</comment>
<comment type="subcellular location">
    <subcellularLocation>
        <location evidence="1">Cytoplasm</location>
    </subcellularLocation>
</comment>
<comment type="domain">
    <text evidence="1">The PRC barrel domain binds ribosomal protein uS19.</text>
</comment>
<comment type="similarity">
    <text evidence="1">Belongs to the RimM family.</text>
</comment>